<keyword id="KW-0004">4Fe-4S</keyword>
<keyword id="KW-0408">Iron</keyword>
<keyword id="KW-0411">Iron-sulfur</keyword>
<keyword id="KW-0479">Metal-binding</keyword>
<keyword id="KW-0496">Mitochondrion</keyword>
<keyword id="KW-0949">S-adenosyl-L-methionine</keyword>
<keyword id="KW-0808">Transferase</keyword>
<reference key="1">
    <citation type="journal article" date="2007" name="Plant Cell">
        <title>Dothideomycete-plant interactions illuminated by genome sequencing and EST analysis of the wheat pathogen Stagonospora nodorum.</title>
        <authorList>
            <person name="Hane J.K."/>
            <person name="Lowe R.G.T."/>
            <person name="Solomon P.S."/>
            <person name="Tan K.-C."/>
            <person name="Schoch C.L."/>
            <person name="Spatafora J.W."/>
            <person name="Crous P.W."/>
            <person name="Kodira C.D."/>
            <person name="Birren B.W."/>
            <person name="Galagan J.E."/>
            <person name="Torriani S.F.F."/>
            <person name="McDonald B.A."/>
            <person name="Oliver R.P."/>
        </authorList>
    </citation>
    <scope>NUCLEOTIDE SEQUENCE [LARGE SCALE GENOMIC DNA]</scope>
    <source>
        <strain>SN15 / ATCC MYA-4574 / FGSC 10173</strain>
    </source>
</reference>
<comment type="function">
    <text evidence="1">Catalyzes the radical-mediated insertion of two sulfur atoms into the C-6 and C-8 positions of the octanoyl moiety bound to the lipoyl domains of lipoate-dependent enzymes, thereby converting the octanoylated domains into lipoylated derivatives.</text>
</comment>
<comment type="catalytic activity">
    <reaction evidence="1">
        <text>[[Fe-S] cluster scaffold protein carrying a second [4Fe-4S](2+) cluster] + N(6)-octanoyl-L-lysyl-[protein] + 2 oxidized [2Fe-2S]-[ferredoxin] + 2 S-adenosyl-L-methionine + 4 H(+) = [[Fe-S] cluster scaffold protein] + N(6)-[(R)-dihydrolipoyl]-L-lysyl-[protein] + 4 Fe(3+) + 2 hydrogen sulfide + 2 5'-deoxyadenosine + 2 L-methionine + 2 reduced [2Fe-2S]-[ferredoxin]</text>
        <dbReference type="Rhea" id="RHEA:16585"/>
        <dbReference type="Rhea" id="RHEA-COMP:9928"/>
        <dbReference type="Rhea" id="RHEA-COMP:10000"/>
        <dbReference type="Rhea" id="RHEA-COMP:10001"/>
        <dbReference type="Rhea" id="RHEA-COMP:10475"/>
        <dbReference type="Rhea" id="RHEA-COMP:14568"/>
        <dbReference type="Rhea" id="RHEA-COMP:14569"/>
        <dbReference type="ChEBI" id="CHEBI:15378"/>
        <dbReference type="ChEBI" id="CHEBI:17319"/>
        <dbReference type="ChEBI" id="CHEBI:29034"/>
        <dbReference type="ChEBI" id="CHEBI:29919"/>
        <dbReference type="ChEBI" id="CHEBI:33722"/>
        <dbReference type="ChEBI" id="CHEBI:33737"/>
        <dbReference type="ChEBI" id="CHEBI:33738"/>
        <dbReference type="ChEBI" id="CHEBI:57844"/>
        <dbReference type="ChEBI" id="CHEBI:59789"/>
        <dbReference type="ChEBI" id="CHEBI:78809"/>
        <dbReference type="ChEBI" id="CHEBI:83100"/>
        <dbReference type="EC" id="2.8.1.8"/>
    </reaction>
</comment>
<comment type="cofactor">
    <cofactor evidence="1">
        <name>[4Fe-4S] cluster</name>
        <dbReference type="ChEBI" id="CHEBI:49883"/>
    </cofactor>
    <text evidence="1">Binds 2 [4Fe-4S] clusters per subunit. One cluster is coordinated with 3 cysteines and an exchangeable S-adenosyl-L-methionine.</text>
</comment>
<comment type="pathway">
    <text evidence="1">Protein modification; protein lipoylation via endogenous pathway; protein N(6)-(lipoyl)lysine from octanoyl-[acyl-carrier-protein]: step 2/2.</text>
</comment>
<comment type="subcellular location">
    <subcellularLocation>
        <location evidence="1">Mitochondrion</location>
    </subcellularLocation>
</comment>
<comment type="miscellaneous">
    <text evidence="1">This protein may be expected to contain an N-terminal transit peptide but none has been predicted.</text>
</comment>
<comment type="similarity">
    <text evidence="1">Belongs to the radical SAM superfamily. Lipoyl synthase family.</text>
</comment>
<organism>
    <name type="scientific">Phaeosphaeria nodorum (strain SN15 / ATCC MYA-4574 / FGSC 10173)</name>
    <name type="common">Glume blotch fungus</name>
    <name type="synonym">Parastagonospora nodorum</name>
    <dbReference type="NCBI Taxonomy" id="321614"/>
    <lineage>
        <taxon>Eukaryota</taxon>
        <taxon>Fungi</taxon>
        <taxon>Dikarya</taxon>
        <taxon>Ascomycota</taxon>
        <taxon>Pezizomycotina</taxon>
        <taxon>Dothideomycetes</taxon>
        <taxon>Pleosporomycetidae</taxon>
        <taxon>Pleosporales</taxon>
        <taxon>Pleosporineae</taxon>
        <taxon>Phaeosphaeriaceae</taxon>
        <taxon>Parastagonospora</taxon>
    </lineage>
</organism>
<feature type="chain" id="PRO_0000398280" description="Lipoyl synthase, mitochondrial">
    <location>
        <begin position="1"/>
        <end position="378"/>
    </location>
</feature>
<feature type="domain" description="Radical SAM core" evidence="2">
    <location>
        <begin position="111"/>
        <end position="332"/>
    </location>
</feature>
<feature type="binding site" evidence="1">
    <location>
        <position position="97"/>
    </location>
    <ligand>
        <name>[4Fe-4S] cluster</name>
        <dbReference type="ChEBI" id="CHEBI:49883"/>
        <label>1</label>
    </ligand>
</feature>
<feature type="binding site" evidence="1">
    <location>
        <position position="102"/>
    </location>
    <ligand>
        <name>[4Fe-4S] cluster</name>
        <dbReference type="ChEBI" id="CHEBI:49883"/>
        <label>1</label>
    </ligand>
</feature>
<feature type="binding site" evidence="1">
    <location>
        <position position="108"/>
    </location>
    <ligand>
        <name>[4Fe-4S] cluster</name>
        <dbReference type="ChEBI" id="CHEBI:49883"/>
        <label>1</label>
    </ligand>
</feature>
<feature type="binding site" evidence="1">
    <location>
        <position position="128"/>
    </location>
    <ligand>
        <name>[4Fe-4S] cluster</name>
        <dbReference type="ChEBI" id="CHEBI:49883"/>
        <label>2</label>
        <note>4Fe-4S-S-AdoMet</note>
    </ligand>
</feature>
<feature type="binding site" evidence="1">
    <location>
        <position position="132"/>
    </location>
    <ligand>
        <name>[4Fe-4S] cluster</name>
        <dbReference type="ChEBI" id="CHEBI:49883"/>
        <label>2</label>
        <note>4Fe-4S-S-AdoMet</note>
    </ligand>
</feature>
<feature type="binding site" evidence="1">
    <location>
        <position position="135"/>
    </location>
    <ligand>
        <name>[4Fe-4S] cluster</name>
        <dbReference type="ChEBI" id="CHEBI:49883"/>
        <label>2</label>
        <note>4Fe-4S-S-AdoMet</note>
    </ligand>
</feature>
<feature type="binding site" evidence="1">
    <location>
        <position position="343"/>
    </location>
    <ligand>
        <name>[4Fe-4S] cluster</name>
        <dbReference type="ChEBI" id="CHEBI:49883"/>
        <label>1</label>
    </ligand>
</feature>
<sequence length="378" mass="41504">MLTSIRHNYRLSAIITPTTAAQADTLNAGPSFGDFVAPDAPLSPAEAYEIKTVQVGPEGRKKTITRLPEWLKTPIPSNANYKKIKKDLRGLNLHTVCEEAKCPNISDCWGGSDKSAATATIMLGGDTCTRGCRFCSVKTSKAPPPLDPHEPENTAEALSRWGLGYVVLTIVDRDDLADGGARHAMETIMKIKQKAPSMLVEALVGDYAGDAEMVKLVANSGLDVFAHNVETTEALTPYVRDRRANFKQSLNVLRIAKETKPELITKTSIMLGLGETEDELWKALKDLRANDVDVVTFGQYMRPTKKHMAVHEYVTPDVFEMWRQRALDMGFLYCASGPLVRSSYKAGEAFIENVIKKRRMGRGGQVGGAQIAEMEKSA</sequence>
<name>LIPA_PHANO</name>
<dbReference type="EC" id="2.8.1.8" evidence="1"/>
<dbReference type="EMBL" id="CH445325">
    <property type="protein sequence ID" value="EAT91765.2"/>
    <property type="molecule type" value="Genomic_DNA"/>
</dbReference>
<dbReference type="RefSeq" id="XP_001790961.1">
    <property type="nucleotide sequence ID" value="XM_001790909.1"/>
</dbReference>
<dbReference type="SMR" id="Q0V6U4"/>
<dbReference type="FunCoup" id="Q0V6U4">
    <property type="interactions" value="529"/>
</dbReference>
<dbReference type="STRING" id="321614.Q0V6U4"/>
<dbReference type="EnsemblFungi" id="SNOT_00270">
    <property type="protein sequence ID" value="SNOT_00270"/>
    <property type="gene ID" value="SNOG_00270"/>
</dbReference>
<dbReference type="GeneID" id="5967982"/>
<dbReference type="KEGG" id="pno:SNOG_00270"/>
<dbReference type="VEuPathDB" id="FungiDB:JI435_002700"/>
<dbReference type="eggNOG" id="KOG2672">
    <property type="taxonomic scope" value="Eukaryota"/>
</dbReference>
<dbReference type="HOGENOM" id="CLU_033144_0_1_1"/>
<dbReference type="InParanoid" id="Q0V6U4"/>
<dbReference type="UniPathway" id="UPA00538">
    <property type="reaction ID" value="UER00593"/>
</dbReference>
<dbReference type="Proteomes" id="UP000001055">
    <property type="component" value="Unassembled WGS sequence"/>
</dbReference>
<dbReference type="GO" id="GO:0005739">
    <property type="term" value="C:mitochondrion"/>
    <property type="evidence" value="ECO:0000318"/>
    <property type="project" value="GO_Central"/>
</dbReference>
<dbReference type="GO" id="GO:0051539">
    <property type="term" value="F:4 iron, 4 sulfur cluster binding"/>
    <property type="evidence" value="ECO:0007669"/>
    <property type="project" value="UniProtKB-UniRule"/>
</dbReference>
<dbReference type="GO" id="GO:0016992">
    <property type="term" value="F:lipoate synthase activity"/>
    <property type="evidence" value="ECO:0000318"/>
    <property type="project" value="GO_Central"/>
</dbReference>
<dbReference type="GO" id="GO:0046872">
    <property type="term" value="F:metal ion binding"/>
    <property type="evidence" value="ECO:0007669"/>
    <property type="project" value="UniProtKB-KW"/>
</dbReference>
<dbReference type="GO" id="GO:0009107">
    <property type="term" value="P:lipoate biosynthetic process"/>
    <property type="evidence" value="ECO:0000318"/>
    <property type="project" value="GO_Central"/>
</dbReference>
<dbReference type="CDD" id="cd01335">
    <property type="entry name" value="Radical_SAM"/>
    <property type="match status" value="1"/>
</dbReference>
<dbReference type="FunFam" id="3.20.20.70:FF:000036">
    <property type="entry name" value="Lipoyl synthase, mitochondrial"/>
    <property type="match status" value="1"/>
</dbReference>
<dbReference type="Gene3D" id="3.20.20.70">
    <property type="entry name" value="Aldolase class I"/>
    <property type="match status" value="1"/>
</dbReference>
<dbReference type="HAMAP" id="MF_00206">
    <property type="entry name" value="Lipoyl_synth"/>
    <property type="match status" value="1"/>
</dbReference>
<dbReference type="InterPro" id="IPR013785">
    <property type="entry name" value="Aldolase_TIM"/>
</dbReference>
<dbReference type="InterPro" id="IPR006638">
    <property type="entry name" value="Elp3/MiaA/NifB-like_rSAM"/>
</dbReference>
<dbReference type="InterPro" id="IPR031691">
    <property type="entry name" value="LIAS_N"/>
</dbReference>
<dbReference type="InterPro" id="IPR003698">
    <property type="entry name" value="Lipoyl_synth"/>
</dbReference>
<dbReference type="InterPro" id="IPR007197">
    <property type="entry name" value="rSAM"/>
</dbReference>
<dbReference type="NCBIfam" id="TIGR00510">
    <property type="entry name" value="lipA"/>
    <property type="match status" value="1"/>
</dbReference>
<dbReference type="NCBIfam" id="NF004019">
    <property type="entry name" value="PRK05481.1"/>
    <property type="match status" value="1"/>
</dbReference>
<dbReference type="NCBIfam" id="NF009544">
    <property type="entry name" value="PRK12928.1"/>
    <property type="match status" value="1"/>
</dbReference>
<dbReference type="PANTHER" id="PTHR10949">
    <property type="entry name" value="LIPOYL SYNTHASE"/>
    <property type="match status" value="1"/>
</dbReference>
<dbReference type="PANTHER" id="PTHR10949:SF0">
    <property type="entry name" value="LIPOYL SYNTHASE, MITOCHONDRIAL"/>
    <property type="match status" value="1"/>
</dbReference>
<dbReference type="Pfam" id="PF16881">
    <property type="entry name" value="LIAS_N"/>
    <property type="match status" value="1"/>
</dbReference>
<dbReference type="Pfam" id="PF04055">
    <property type="entry name" value="Radical_SAM"/>
    <property type="match status" value="1"/>
</dbReference>
<dbReference type="PIRSF" id="PIRSF005963">
    <property type="entry name" value="Lipoyl_synth"/>
    <property type="match status" value="1"/>
</dbReference>
<dbReference type="SFLD" id="SFLDF00271">
    <property type="entry name" value="lipoyl_synthase"/>
    <property type="match status" value="1"/>
</dbReference>
<dbReference type="SFLD" id="SFLDS00029">
    <property type="entry name" value="Radical_SAM"/>
    <property type="match status" value="1"/>
</dbReference>
<dbReference type="SMART" id="SM00729">
    <property type="entry name" value="Elp3"/>
    <property type="match status" value="1"/>
</dbReference>
<dbReference type="SUPFAM" id="SSF102114">
    <property type="entry name" value="Radical SAM enzymes"/>
    <property type="match status" value="1"/>
</dbReference>
<dbReference type="PROSITE" id="PS51918">
    <property type="entry name" value="RADICAL_SAM"/>
    <property type="match status" value="1"/>
</dbReference>
<protein>
    <recommendedName>
        <fullName evidence="1">Lipoyl synthase, mitochondrial</fullName>
        <ecNumber evidence="1">2.8.1.8</ecNumber>
    </recommendedName>
    <alternativeName>
        <fullName evidence="1">Lipoate synthase</fullName>
        <shortName evidence="1">LS</shortName>
        <shortName evidence="1">Lip-syn</shortName>
    </alternativeName>
    <alternativeName>
        <fullName evidence="1">Lipoic acid synthase</fullName>
    </alternativeName>
</protein>
<accession>Q0V6U4</accession>
<evidence type="ECO:0000255" key="1">
    <source>
        <dbReference type="HAMAP-Rule" id="MF_03123"/>
    </source>
</evidence>
<evidence type="ECO:0000255" key="2">
    <source>
        <dbReference type="PROSITE-ProRule" id="PRU01266"/>
    </source>
</evidence>
<gene>
    <name type="ORF">SNOG_00270</name>
</gene>
<proteinExistence type="inferred from homology"/>